<gene>
    <name evidence="1" type="primary">smpB</name>
    <name type="ordered locus">Bcep18194_A5309</name>
</gene>
<protein>
    <recommendedName>
        <fullName evidence="1">SsrA-binding protein</fullName>
    </recommendedName>
    <alternativeName>
        <fullName evidence="1">Small protein B</fullName>
    </alternativeName>
</protein>
<sequence length="148" mass="17245">MSIIDNRKAHFDYHIEERYEAGLVLEGWEVKALRAGRGQIREGYVVIKHDEIFLIGTHISPLPEASTHITPDPVRTRKLLLHREEIKKLIGKVEQRGYTLVPLNFHYKGGRVKCDIALAKGKKLHDKRETEKKRDWEREKARIMRAGT</sequence>
<name>SSRP_BURL3</name>
<keyword id="KW-0963">Cytoplasm</keyword>
<keyword id="KW-0694">RNA-binding</keyword>
<comment type="function">
    <text evidence="1">Required for rescue of stalled ribosomes mediated by trans-translation. Binds to transfer-messenger RNA (tmRNA), required for stable association of tmRNA with ribosomes. tmRNA and SmpB together mimic tRNA shape, replacing the anticodon stem-loop with SmpB. tmRNA is encoded by the ssrA gene; the 2 termini fold to resemble tRNA(Ala) and it encodes a 'tag peptide', a short internal open reading frame. During trans-translation Ala-aminoacylated tmRNA acts like a tRNA, entering the A-site of stalled ribosomes, displacing the stalled mRNA. The ribosome then switches to translate the ORF on the tmRNA; the nascent peptide is terminated with the 'tag peptide' encoded by the tmRNA and targeted for degradation. The ribosome is freed to recommence translation, which seems to be the essential function of trans-translation.</text>
</comment>
<comment type="subcellular location">
    <subcellularLocation>
        <location evidence="1">Cytoplasm</location>
    </subcellularLocation>
    <text evidence="1">The tmRNA-SmpB complex associates with stalled 70S ribosomes.</text>
</comment>
<comment type="similarity">
    <text evidence="1">Belongs to the SmpB family.</text>
</comment>
<proteinExistence type="inferred from homology"/>
<feature type="chain" id="PRO_1000002019" description="SsrA-binding protein">
    <location>
        <begin position="1"/>
        <end position="148"/>
    </location>
</feature>
<feature type="region of interest" description="Disordered" evidence="2">
    <location>
        <begin position="129"/>
        <end position="148"/>
    </location>
</feature>
<feature type="compositionally biased region" description="Basic and acidic residues" evidence="2">
    <location>
        <begin position="129"/>
        <end position="142"/>
    </location>
</feature>
<reference key="1">
    <citation type="submission" date="2005-10" db="EMBL/GenBank/DDBJ databases">
        <title>Complete sequence of chromosome 1 of Burkholderia sp. 383.</title>
        <authorList>
            <consortium name="US DOE Joint Genome Institute"/>
            <person name="Copeland A."/>
            <person name="Lucas S."/>
            <person name="Lapidus A."/>
            <person name="Barry K."/>
            <person name="Detter J.C."/>
            <person name="Glavina T."/>
            <person name="Hammon N."/>
            <person name="Israni S."/>
            <person name="Pitluck S."/>
            <person name="Chain P."/>
            <person name="Malfatti S."/>
            <person name="Shin M."/>
            <person name="Vergez L."/>
            <person name="Schmutz J."/>
            <person name="Larimer F."/>
            <person name="Land M."/>
            <person name="Kyrpides N."/>
            <person name="Lykidis A."/>
            <person name="Richardson P."/>
        </authorList>
    </citation>
    <scope>NUCLEOTIDE SEQUENCE [LARGE SCALE GENOMIC DNA]</scope>
    <source>
        <strain>ATCC 17760 / DSM 23089 / LMG 22485 / NCIMB 9086 / R18194 / 383</strain>
    </source>
</reference>
<accession>Q39F63</accession>
<organism>
    <name type="scientific">Burkholderia lata (strain ATCC 17760 / DSM 23089 / LMG 22485 / NCIMB 9086 / R18194 / 383)</name>
    <dbReference type="NCBI Taxonomy" id="482957"/>
    <lineage>
        <taxon>Bacteria</taxon>
        <taxon>Pseudomonadati</taxon>
        <taxon>Pseudomonadota</taxon>
        <taxon>Betaproteobacteria</taxon>
        <taxon>Burkholderiales</taxon>
        <taxon>Burkholderiaceae</taxon>
        <taxon>Burkholderia</taxon>
        <taxon>Burkholderia cepacia complex</taxon>
    </lineage>
</organism>
<dbReference type="EMBL" id="CP000151">
    <property type="protein sequence ID" value="ABB08903.1"/>
    <property type="molecule type" value="Genomic_DNA"/>
</dbReference>
<dbReference type="RefSeq" id="WP_011352441.1">
    <property type="nucleotide sequence ID" value="NC_007510.1"/>
</dbReference>
<dbReference type="SMR" id="Q39F63"/>
<dbReference type="GeneID" id="45095185"/>
<dbReference type="KEGG" id="bur:Bcep18194_A5309"/>
<dbReference type="PATRIC" id="fig|482957.22.peg.2257"/>
<dbReference type="HOGENOM" id="CLU_108953_3_0_4"/>
<dbReference type="Proteomes" id="UP000002705">
    <property type="component" value="Chromosome 1"/>
</dbReference>
<dbReference type="GO" id="GO:0005829">
    <property type="term" value="C:cytosol"/>
    <property type="evidence" value="ECO:0007669"/>
    <property type="project" value="TreeGrafter"/>
</dbReference>
<dbReference type="GO" id="GO:0003723">
    <property type="term" value="F:RNA binding"/>
    <property type="evidence" value="ECO:0007669"/>
    <property type="project" value="UniProtKB-UniRule"/>
</dbReference>
<dbReference type="GO" id="GO:0070929">
    <property type="term" value="P:trans-translation"/>
    <property type="evidence" value="ECO:0007669"/>
    <property type="project" value="UniProtKB-UniRule"/>
</dbReference>
<dbReference type="CDD" id="cd09294">
    <property type="entry name" value="SmpB"/>
    <property type="match status" value="1"/>
</dbReference>
<dbReference type="Gene3D" id="2.40.280.10">
    <property type="match status" value="1"/>
</dbReference>
<dbReference type="HAMAP" id="MF_00023">
    <property type="entry name" value="SmpB"/>
    <property type="match status" value="1"/>
</dbReference>
<dbReference type="InterPro" id="IPR023620">
    <property type="entry name" value="SmpB"/>
</dbReference>
<dbReference type="InterPro" id="IPR000037">
    <property type="entry name" value="SsrA-bd_prot"/>
</dbReference>
<dbReference type="InterPro" id="IPR020081">
    <property type="entry name" value="SsrA-bd_prot_CS"/>
</dbReference>
<dbReference type="NCBIfam" id="NF003843">
    <property type="entry name" value="PRK05422.1"/>
    <property type="match status" value="1"/>
</dbReference>
<dbReference type="NCBIfam" id="TIGR00086">
    <property type="entry name" value="smpB"/>
    <property type="match status" value="1"/>
</dbReference>
<dbReference type="PANTHER" id="PTHR30308:SF2">
    <property type="entry name" value="SSRA-BINDING PROTEIN"/>
    <property type="match status" value="1"/>
</dbReference>
<dbReference type="PANTHER" id="PTHR30308">
    <property type="entry name" value="TMRNA-BINDING COMPONENT OF TRANS-TRANSLATION TAGGING COMPLEX"/>
    <property type="match status" value="1"/>
</dbReference>
<dbReference type="Pfam" id="PF01668">
    <property type="entry name" value="SmpB"/>
    <property type="match status" value="1"/>
</dbReference>
<dbReference type="SUPFAM" id="SSF74982">
    <property type="entry name" value="Small protein B (SmpB)"/>
    <property type="match status" value="1"/>
</dbReference>
<dbReference type="PROSITE" id="PS01317">
    <property type="entry name" value="SSRP"/>
    <property type="match status" value="1"/>
</dbReference>
<evidence type="ECO:0000255" key="1">
    <source>
        <dbReference type="HAMAP-Rule" id="MF_00023"/>
    </source>
</evidence>
<evidence type="ECO:0000256" key="2">
    <source>
        <dbReference type="SAM" id="MobiDB-lite"/>
    </source>
</evidence>